<name>RS10_TREPS</name>
<organism>
    <name type="scientific">Treponema pallidum subsp. pallidum (strain SS14)</name>
    <dbReference type="NCBI Taxonomy" id="455434"/>
    <lineage>
        <taxon>Bacteria</taxon>
        <taxon>Pseudomonadati</taxon>
        <taxon>Spirochaetota</taxon>
        <taxon>Spirochaetia</taxon>
        <taxon>Spirochaetales</taxon>
        <taxon>Treponemataceae</taxon>
        <taxon>Treponema</taxon>
    </lineage>
</organism>
<dbReference type="EMBL" id="CP000805">
    <property type="protein sequence ID" value="ACD70614.1"/>
    <property type="molecule type" value="Genomic_DNA"/>
</dbReference>
<dbReference type="RefSeq" id="WP_010881635.1">
    <property type="nucleotide sequence ID" value="NC_021508.1"/>
</dbReference>
<dbReference type="SMR" id="B2S2D5"/>
<dbReference type="GeneID" id="93875976"/>
<dbReference type="KEGG" id="tpp:TPASS_0188"/>
<dbReference type="PATRIC" id="fig|455434.6.peg.191"/>
<dbReference type="Proteomes" id="UP000001202">
    <property type="component" value="Chromosome"/>
</dbReference>
<dbReference type="GO" id="GO:1990904">
    <property type="term" value="C:ribonucleoprotein complex"/>
    <property type="evidence" value="ECO:0007669"/>
    <property type="project" value="UniProtKB-KW"/>
</dbReference>
<dbReference type="GO" id="GO:0005840">
    <property type="term" value="C:ribosome"/>
    <property type="evidence" value="ECO:0007669"/>
    <property type="project" value="UniProtKB-KW"/>
</dbReference>
<dbReference type="GO" id="GO:0003735">
    <property type="term" value="F:structural constituent of ribosome"/>
    <property type="evidence" value="ECO:0007669"/>
    <property type="project" value="InterPro"/>
</dbReference>
<dbReference type="GO" id="GO:0000049">
    <property type="term" value="F:tRNA binding"/>
    <property type="evidence" value="ECO:0007669"/>
    <property type="project" value="UniProtKB-UniRule"/>
</dbReference>
<dbReference type="GO" id="GO:0006412">
    <property type="term" value="P:translation"/>
    <property type="evidence" value="ECO:0007669"/>
    <property type="project" value="UniProtKB-UniRule"/>
</dbReference>
<dbReference type="FunFam" id="3.30.70.600:FF:000003">
    <property type="entry name" value="30S ribosomal protein S10"/>
    <property type="match status" value="1"/>
</dbReference>
<dbReference type="Gene3D" id="3.30.70.600">
    <property type="entry name" value="Ribosomal protein S10 domain"/>
    <property type="match status" value="1"/>
</dbReference>
<dbReference type="HAMAP" id="MF_00508">
    <property type="entry name" value="Ribosomal_uS10"/>
    <property type="match status" value="1"/>
</dbReference>
<dbReference type="InterPro" id="IPR001848">
    <property type="entry name" value="Ribosomal_uS10"/>
</dbReference>
<dbReference type="InterPro" id="IPR018268">
    <property type="entry name" value="Ribosomal_uS10_CS"/>
</dbReference>
<dbReference type="InterPro" id="IPR027486">
    <property type="entry name" value="Ribosomal_uS10_dom"/>
</dbReference>
<dbReference type="InterPro" id="IPR036838">
    <property type="entry name" value="Ribosomal_uS10_dom_sf"/>
</dbReference>
<dbReference type="NCBIfam" id="NF001861">
    <property type="entry name" value="PRK00596.1"/>
    <property type="match status" value="1"/>
</dbReference>
<dbReference type="NCBIfam" id="TIGR01049">
    <property type="entry name" value="rpsJ_bact"/>
    <property type="match status" value="1"/>
</dbReference>
<dbReference type="PANTHER" id="PTHR11700">
    <property type="entry name" value="30S RIBOSOMAL PROTEIN S10 FAMILY MEMBER"/>
    <property type="match status" value="1"/>
</dbReference>
<dbReference type="Pfam" id="PF00338">
    <property type="entry name" value="Ribosomal_S10"/>
    <property type="match status" value="1"/>
</dbReference>
<dbReference type="PRINTS" id="PR00971">
    <property type="entry name" value="RIBOSOMALS10"/>
</dbReference>
<dbReference type="SMART" id="SM01403">
    <property type="entry name" value="Ribosomal_S10"/>
    <property type="match status" value="1"/>
</dbReference>
<dbReference type="SUPFAM" id="SSF54999">
    <property type="entry name" value="Ribosomal protein S10"/>
    <property type="match status" value="1"/>
</dbReference>
<dbReference type="PROSITE" id="PS00361">
    <property type="entry name" value="RIBOSOMAL_S10"/>
    <property type="match status" value="1"/>
</dbReference>
<keyword id="KW-0687">Ribonucleoprotein</keyword>
<keyword id="KW-0689">Ribosomal protein</keyword>
<accession>B2S2D5</accession>
<evidence type="ECO:0000255" key="1">
    <source>
        <dbReference type="HAMAP-Rule" id="MF_00508"/>
    </source>
</evidence>
<evidence type="ECO:0000305" key="2"/>
<protein>
    <recommendedName>
        <fullName evidence="1">Small ribosomal subunit protein uS10</fullName>
    </recommendedName>
    <alternativeName>
        <fullName evidence="2">30S ribosomal protein S10</fullName>
    </alternativeName>
</protein>
<comment type="function">
    <text evidence="1">Involved in the binding of tRNA to the ribosomes.</text>
</comment>
<comment type="subunit">
    <text evidence="1">Part of the 30S ribosomal subunit.</text>
</comment>
<comment type="similarity">
    <text evidence="1">Belongs to the universal ribosomal protein uS10 family.</text>
</comment>
<feature type="chain" id="PRO_1000127200" description="Small ribosomal subunit protein uS10">
    <location>
        <begin position="1"/>
        <end position="102"/>
    </location>
</feature>
<gene>
    <name evidence="1" type="primary">rpsJ</name>
    <name type="ordered locus">TPASS_0188</name>
</gene>
<proteinExistence type="inferred from homology"/>
<reference key="1">
    <citation type="journal article" date="2008" name="BMC Microbiol.">
        <title>Complete genome sequence of Treponema pallidum ssp. pallidum strain SS14 determined with oligonucleotide arrays.</title>
        <authorList>
            <person name="Matejkova P."/>
            <person name="Strouhal M."/>
            <person name="Smajs D."/>
            <person name="Norris S.J."/>
            <person name="Palzkill T."/>
            <person name="Petrosino J.F."/>
            <person name="Sodergren E."/>
            <person name="Norton J.E."/>
            <person name="Singh J."/>
            <person name="Richmond T.A."/>
            <person name="Molla M.N."/>
            <person name="Albert T.J."/>
            <person name="Weinstock G.M."/>
        </authorList>
    </citation>
    <scope>NUCLEOTIDE SEQUENCE [LARGE SCALE GENOMIC DNA]</scope>
    <source>
        <strain>SS14</strain>
    </source>
</reference>
<sequence>MARERIRVKLCGFDVELVDQSSRAIVHAVQKAGAEVLGPIPLPTRMHKFTVLRSPHVNKKSREQFEMRTHKRLIDIIEPSQEVMNALMGLELSAGVDVRIKQ</sequence>